<gene>
    <name type="primary">vraB</name>
    <name type="ordered locus">SA0534</name>
</gene>
<reference key="1">
    <citation type="journal article" date="2001" name="Lancet">
        <title>Whole genome sequencing of meticillin-resistant Staphylococcus aureus.</title>
        <authorList>
            <person name="Kuroda M."/>
            <person name="Ohta T."/>
            <person name="Uchiyama I."/>
            <person name="Baba T."/>
            <person name="Yuzawa H."/>
            <person name="Kobayashi I."/>
            <person name="Cui L."/>
            <person name="Oguchi A."/>
            <person name="Aoki K."/>
            <person name="Nagai Y."/>
            <person name="Lian J.-Q."/>
            <person name="Ito T."/>
            <person name="Kanamori M."/>
            <person name="Matsumaru H."/>
            <person name="Maruyama A."/>
            <person name="Murakami H."/>
            <person name="Hosoyama A."/>
            <person name="Mizutani-Ui Y."/>
            <person name="Takahashi N.K."/>
            <person name="Sawano T."/>
            <person name="Inoue R."/>
            <person name="Kaito C."/>
            <person name="Sekimizu K."/>
            <person name="Hirakawa H."/>
            <person name="Kuhara S."/>
            <person name="Goto S."/>
            <person name="Yabuzaki J."/>
            <person name="Kanehisa M."/>
            <person name="Yamashita A."/>
            <person name="Oshima K."/>
            <person name="Furuya K."/>
            <person name="Yoshino C."/>
            <person name="Shiba T."/>
            <person name="Hattori M."/>
            <person name="Ogasawara N."/>
            <person name="Hayashi H."/>
            <person name="Hiramatsu K."/>
        </authorList>
    </citation>
    <scope>NUCLEOTIDE SEQUENCE [LARGE SCALE GENOMIC DNA]</scope>
    <source>
        <strain>N315</strain>
    </source>
</reference>
<dbReference type="EC" id="2.3.1.-"/>
<dbReference type="EMBL" id="BA000018">
    <property type="protein sequence ID" value="BAB41765.1"/>
    <property type="molecule type" value="Genomic_DNA"/>
</dbReference>
<dbReference type="RefSeq" id="WP_001070676.1">
    <property type="nucleotide sequence ID" value="NC_002745.2"/>
</dbReference>
<dbReference type="SMR" id="Q7A768"/>
<dbReference type="EnsemblBacteria" id="BAB41765">
    <property type="protein sequence ID" value="BAB41765"/>
    <property type="gene ID" value="BAB41765"/>
</dbReference>
<dbReference type="KEGG" id="sau:SA0534"/>
<dbReference type="HOGENOM" id="CLU_031026_2_1_9"/>
<dbReference type="GO" id="GO:0005737">
    <property type="term" value="C:cytoplasm"/>
    <property type="evidence" value="ECO:0007669"/>
    <property type="project" value="UniProtKB-ARBA"/>
</dbReference>
<dbReference type="GO" id="GO:0003988">
    <property type="term" value="F:acetyl-CoA C-acyltransferase activity"/>
    <property type="evidence" value="ECO:0007669"/>
    <property type="project" value="TreeGrafter"/>
</dbReference>
<dbReference type="GO" id="GO:0006635">
    <property type="term" value="P:fatty acid beta-oxidation"/>
    <property type="evidence" value="ECO:0007669"/>
    <property type="project" value="TreeGrafter"/>
</dbReference>
<dbReference type="GO" id="GO:0010124">
    <property type="term" value="P:phenylacetate catabolic process"/>
    <property type="evidence" value="ECO:0007669"/>
    <property type="project" value="TreeGrafter"/>
</dbReference>
<dbReference type="CDD" id="cd00751">
    <property type="entry name" value="thiolase"/>
    <property type="match status" value="1"/>
</dbReference>
<dbReference type="Gene3D" id="3.40.47.10">
    <property type="match status" value="2"/>
</dbReference>
<dbReference type="InterPro" id="IPR002155">
    <property type="entry name" value="Thiolase"/>
</dbReference>
<dbReference type="InterPro" id="IPR016039">
    <property type="entry name" value="Thiolase-like"/>
</dbReference>
<dbReference type="InterPro" id="IPR050215">
    <property type="entry name" value="Thiolase-like_sf_Thiolase"/>
</dbReference>
<dbReference type="InterPro" id="IPR020617">
    <property type="entry name" value="Thiolase_C"/>
</dbReference>
<dbReference type="InterPro" id="IPR020613">
    <property type="entry name" value="Thiolase_CS"/>
</dbReference>
<dbReference type="InterPro" id="IPR020616">
    <property type="entry name" value="Thiolase_N"/>
</dbReference>
<dbReference type="NCBIfam" id="TIGR01930">
    <property type="entry name" value="AcCoA-C-Actrans"/>
    <property type="match status" value="1"/>
</dbReference>
<dbReference type="PANTHER" id="PTHR43853">
    <property type="entry name" value="3-KETOACYL-COA THIOLASE, PEROXISOMAL"/>
    <property type="match status" value="1"/>
</dbReference>
<dbReference type="PANTHER" id="PTHR43853:SF3">
    <property type="entry name" value="ACETYL-COA C-ACETYLTRANSFERASE YHFS-RELATED"/>
    <property type="match status" value="1"/>
</dbReference>
<dbReference type="Pfam" id="PF02803">
    <property type="entry name" value="Thiolase_C"/>
    <property type="match status" value="1"/>
</dbReference>
<dbReference type="Pfam" id="PF00108">
    <property type="entry name" value="Thiolase_N"/>
    <property type="match status" value="1"/>
</dbReference>
<dbReference type="PIRSF" id="PIRSF000429">
    <property type="entry name" value="Ac-CoA_Ac_transf"/>
    <property type="match status" value="1"/>
</dbReference>
<dbReference type="SUPFAM" id="SSF53901">
    <property type="entry name" value="Thiolase-like"/>
    <property type="match status" value="2"/>
</dbReference>
<dbReference type="PROSITE" id="PS00737">
    <property type="entry name" value="THIOLASE_2"/>
    <property type="match status" value="1"/>
</dbReference>
<accession>Q7A768</accession>
<keyword id="KW-0012">Acyltransferase</keyword>
<keyword id="KW-0808">Transferase</keyword>
<name>VRAB_STAAN</name>
<feature type="chain" id="PRO_0000206428" description="Putative acetyl-CoA C-acetyltransferase VraB">
    <location>
        <begin position="1"/>
        <end position="379"/>
    </location>
</feature>
<feature type="active site" description="Acyl-thioester intermediate" evidence="1">
    <location>
        <position position="86"/>
    </location>
</feature>
<feature type="active site" description="Proton acceptor" evidence="1">
    <location>
        <position position="338"/>
    </location>
</feature>
<evidence type="ECO:0000250" key="1"/>
<evidence type="ECO:0000305" key="2"/>
<organism>
    <name type="scientific">Staphylococcus aureus (strain N315)</name>
    <dbReference type="NCBI Taxonomy" id="158879"/>
    <lineage>
        <taxon>Bacteria</taxon>
        <taxon>Bacillati</taxon>
        <taxon>Bacillota</taxon>
        <taxon>Bacilli</taxon>
        <taxon>Bacillales</taxon>
        <taxon>Staphylococcaceae</taxon>
        <taxon>Staphylococcus</taxon>
    </lineage>
</organism>
<proteinExistence type="inferred from homology"/>
<sequence length="379" mass="41094">MNQAVIVAAKRTAFGKYGGTLKHLEPEQLLKPLFQHFKEKYPEVISKIDDVVLGNVVGNGGNIARKALLEAGLKDSIPGVTIDRQCGSGLESVQYACRMIQAGAGKVYIAGGVESTSRAPWKIKRPHSVYETALPEFYERASFAPEMSDPSMIQGAENVAKMYDVSRELQDEFAYRSHQLTAENVKNGNISQEILPITVKGEIFNTDESLKSHIPKDNFGRFKPVIKGGTVTAANSCMKNDGAVLLLIMEKDMAYELGFEHGLLFKDGVTVGVDSNFPGIGPVPAISNLLKRNQLTIENIEVIEINEAFSAQVVACQQALNISNTQLNIWGGALASGHPYGASGAQLVTRLFYMFDKETMIASMGIGGGLGNAALFTRF</sequence>
<comment type="similarity">
    <text evidence="2">Belongs to the thiolase-like superfamily. Thiolase family.</text>
</comment>
<protein>
    <recommendedName>
        <fullName>Putative acetyl-CoA C-acetyltransferase VraB</fullName>
        <ecNumber>2.3.1.-</ecNumber>
    </recommendedName>
</protein>